<name>AKAP8_MOUSE</name>
<feature type="chain" id="PRO_0000075382" description="A-kinase anchor protein 8">
    <location>
        <begin position="1"/>
        <end position="687"/>
    </location>
</feature>
<feature type="zinc finger region" description="C2H2 AKAP95-type 1" evidence="4">
    <location>
        <begin position="389"/>
        <end position="411"/>
    </location>
</feature>
<feature type="zinc finger region" description="C2H2 AKAP95-type 2" evidence="4">
    <location>
        <begin position="478"/>
        <end position="501"/>
    </location>
</feature>
<feature type="region of interest" description="Interaction with DPY30" evidence="1">
    <location>
        <begin position="1"/>
        <end position="210"/>
    </location>
</feature>
<feature type="region of interest" description="Interaction with MCM2" evidence="1">
    <location>
        <begin position="1"/>
        <end position="195"/>
    </location>
</feature>
<feature type="region of interest" description="Disordered" evidence="5">
    <location>
        <begin position="105"/>
        <end position="124"/>
    </location>
</feature>
<feature type="region of interest" description="Interaction with DDX5" evidence="3">
    <location>
        <begin position="109"/>
        <end position="201"/>
    </location>
</feature>
<feature type="region of interest" description="Disordered" evidence="5">
    <location>
        <begin position="185"/>
        <end position="218"/>
    </location>
</feature>
<feature type="region of interest" description="Disordered" evidence="5">
    <location>
        <begin position="277"/>
        <end position="379"/>
    </location>
</feature>
<feature type="region of interest" description="Involved in chromatin-binding" evidence="1">
    <location>
        <begin position="384"/>
        <end position="447"/>
    </location>
</feature>
<feature type="region of interest" description="Involved in condensin complex recruitment" evidence="1">
    <location>
        <begin position="522"/>
        <end position="565"/>
    </location>
</feature>
<feature type="region of interest" description="RII-binding" evidence="3">
    <location>
        <begin position="568"/>
        <end position="585"/>
    </location>
</feature>
<feature type="region of interest" description="Required for interaction with MYCBP" evidence="7">
    <location>
        <begin position="572"/>
        <end position="589"/>
    </location>
</feature>
<feature type="region of interest" description="Disordered" evidence="5">
    <location>
        <begin position="624"/>
        <end position="659"/>
    </location>
</feature>
<feature type="short sequence motif" description="Bipartite nuclear localization signal" evidence="1 3">
    <location>
        <begin position="286"/>
        <end position="303"/>
    </location>
</feature>
<feature type="compositionally biased region" description="Gly residues" evidence="5">
    <location>
        <begin position="109"/>
        <end position="118"/>
    </location>
</feature>
<feature type="compositionally biased region" description="Basic and acidic residues" evidence="5">
    <location>
        <begin position="280"/>
        <end position="294"/>
    </location>
</feature>
<feature type="compositionally biased region" description="Basic and acidic residues" evidence="5">
    <location>
        <begin position="311"/>
        <end position="320"/>
    </location>
</feature>
<feature type="compositionally biased region" description="Acidic residues" evidence="5">
    <location>
        <begin position="321"/>
        <end position="331"/>
    </location>
</feature>
<feature type="compositionally biased region" description="Basic and acidic residues" evidence="5">
    <location>
        <begin position="335"/>
        <end position="357"/>
    </location>
</feature>
<feature type="compositionally biased region" description="Basic and acidic residues" evidence="5">
    <location>
        <begin position="633"/>
        <end position="648"/>
    </location>
</feature>
<feature type="modified residue" description="Phosphoserine" evidence="14">
    <location>
        <position position="72"/>
    </location>
</feature>
<feature type="modified residue" description="Asymmetric dimethylarginine; alternate" evidence="15">
    <location>
        <position position="109"/>
    </location>
</feature>
<feature type="modified residue" description="Omega-N-methylarginine; alternate" evidence="15">
    <location>
        <position position="109"/>
    </location>
</feature>
<feature type="modified residue" description="Phosphoserine" evidence="1">
    <location>
        <position position="199"/>
    </location>
</feature>
<feature type="modified residue" description="Omega-N-methylarginine" evidence="15">
    <location>
        <position position="232"/>
    </location>
</feature>
<feature type="modified residue" description="Omega-N-methylarginine" evidence="15">
    <location>
        <position position="276"/>
    </location>
</feature>
<feature type="modified residue" description="Phosphoserine" evidence="13 14">
    <location>
        <position position="320"/>
    </location>
</feature>
<feature type="modified residue" description="Phosphoserine" evidence="13 14">
    <location>
        <position position="325"/>
    </location>
</feature>
<feature type="modified residue" description="Phosphoserine" evidence="14">
    <location>
        <position position="336"/>
    </location>
</feature>
<feature type="modified residue" description="Phosphothreonine" evidence="3">
    <location>
        <position position="552"/>
    </location>
</feature>
<feature type="modified residue" description="Phosphoserine" evidence="3">
    <location>
        <position position="659"/>
    </location>
</feature>
<feature type="cross-link" description="Glycyl lysine isopeptide (Lys-Gly) (interchain with G-Cter in SUMO2)" evidence="1">
    <location>
        <position position="314"/>
    </location>
</feature>
<feature type="sequence conflict" description="In Ref. 1; BAA84710." evidence="12" ref="1">
    <original>D</original>
    <variation>G</variation>
    <location>
        <position position="323"/>
    </location>
</feature>
<feature type="sequence conflict" description="In Ref. 1; BAA84710." evidence="12" ref="1">
    <original>K</original>
    <variation>E</variation>
    <location>
        <position position="370"/>
    </location>
</feature>
<feature type="sequence conflict" description="In Ref. 1; BAA84710." evidence="12" ref="1">
    <original>D</original>
    <variation>G</variation>
    <location>
        <position position="541"/>
    </location>
</feature>
<feature type="sequence conflict" description="In Ref. 1; BAA84710." evidence="12" ref="1">
    <original>V</original>
    <variation>A</variation>
    <location>
        <position position="544"/>
    </location>
</feature>
<feature type="sequence conflict" description="In Ref. 1; BAA84710." evidence="12" ref="1">
    <original>A</original>
    <variation>T</variation>
    <location>
        <position position="584"/>
    </location>
</feature>
<feature type="sequence conflict" description="In Ref. 1; BAA84710." evidence="12" ref="1">
    <original>E</original>
    <variation>G</variation>
    <location>
        <position position="590"/>
    </location>
</feature>
<sequence length="687" mass="76294">MEQGYGGYGAWSAGPANTQGTYGSGMTSWQGYENYNYYNAQNTSVPAGTPYSYGPASWEATKTNDGGLAAGSPAMHVASFAPEPCTDNSDSLIAKINQRLDMLSKEGGRGGISSGGEGVQDRDSSFRFQPYESYDARPCIPEHNPYRPGYGYDYDFDLGTDRNGSFGGTFNDCRDPAPERGSLDGFLRGRGQGRFQDRSNSSTFIRSDPFMPPSASEPLSTTWNELNYMGGRGLGGPSTSRPPPSLFSQSMAPDYSMMGMQGVGGFGGTMPYGCGRSQTRIRDWPRRRGFERFGPDNMGRKRKQFPLYEEPDAKLARADSDGDLSENDDGAGDLRSGDEEFRGEDDLCDSRKQRGEKEDEDEDVKKRREKQRRRDRMRDRAADRIQFACSVCKFRSFEDEEIQKHLQSKFHKETLRFISTKLPDKTVEFLQEYIINRNKKIEKRRQELLEKESPKPKPDPFKGIGQEHFFKKIEAAHCLACDMLIPAQHQLLQRHLHSVDHNHNRRLAAEQFKKTSLHVAKSVLNNKHIVKMLEKYLKGEDPFVNETADLETEGDENVGEEKEETPEEVAAEVLAEVITAAVKAVEGEGEPAAAHSDVLTEVEGPVDTAEASSDPHTEKLLEEQTCEAASETRSIEDKTRGEAAEARNEAAMPTADAGSTLPVIAIPGIMEDELEQTGAEAKDIPTE</sequence>
<protein>
    <recommendedName>
        <fullName>A-kinase anchor protein 8</fullName>
        <shortName>AKAP-8</shortName>
    </recommendedName>
    <alternativeName>
        <fullName>A-kinase anchor protein 95 kDa</fullName>
        <shortName>AKAP 95</shortName>
    </alternativeName>
</protein>
<keyword id="KW-0963">Cytoplasm</keyword>
<keyword id="KW-0238">DNA-binding</keyword>
<keyword id="KW-0391">Immunity</keyword>
<keyword id="KW-0399">Innate immunity</keyword>
<keyword id="KW-1017">Isopeptide bond</keyword>
<keyword id="KW-0479">Metal-binding</keyword>
<keyword id="KW-0488">Methylation</keyword>
<keyword id="KW-0539">Nucleus</keyword>
<keyword id="KW-0597">Phosphoprotein</keyword>
<keyword id="KW-0653">Protein transport</keyword>
<keyword id="KW-1185">Reference proteome</keyword>
<keyword id="KW-0677">Repeat</keyword>
<keyword id="KW-0804">Transcription</keyword>
<keyword id="KW-0805">Transcription regulation</keyword>
<keyword id="KW-0813">Transport</keyword>
<keyword id="KW-0832">Ubl conjugation</keyword>
<keyword id="KW-0862">Zinc</keyword>
<keyword id="KW-0863">Zinc-finger</keyword>
<comment type="function">
    <text evidence="1 3">Anchoring protein that mediates the subcellular compartmentation of cAMP-dependent protein kinase (PKA type II). Acts as an anchor for a PKA-signaling complex onto mitotic chromosomes, which is required for maintenance of chromosomes in a condensed form throughout mitosis. Recruits condensin complex subunit NCAPD2 to chromosomes required for chromatin condensation; the function appears to be independent from PKA-anchoring (By similarity). Specifically involved in recruitment of CAPD2 to, and condensation of maternal but not paternal chromosomes (PubMed:12082153). May help to deliver cyclin D/E to CDK4 to facilitate cell cycle progression (PubMed:14641107). Required for cell cycle G2/M transition and histone deacetylation during mitosis. In mitotic cells recruits HDAC3 to the vicinity of chromatin leading to deacetylation and subsequent phosphorylation at 'Ser-10' of histone H3; in this function may act redundantly with AKAP8L. Involved in nuclear retention of RPS6KA1 upon ERK activation thus inducing cell proliferation. May be involved in regulation of DNA replication by acting as scaffold for MCM2. Enhances HMT activity of the KMT2 family MLL4/WBP7 complex and is involved in transcriptional regulation. In a teratocarcinoma cell line is involved in retinoic acid-mediated induction of developmental genes implicating H3 'Lys-4' methylation. May be involved in recruitment of active CASP3 to the nucleus in apoptotic cells. May act as a carrier protein of GJA1 for its transport to the nucleus. May play a repressive role in the regulation of rDNA transcription. Preferentially binds GC-rich DNA in vitro. In cells, associates with ribosomal RNA (rRNA) chromatin, preferentially with rRNA promoter and transcribed regions (By similarity). Involved in modulation of Toll-like receptor signaling. Required for the cAMP-dependent suppression of TNF-alpha in early stages of LPS-induced macrophage activation; the function probably implicates targeting of PKA to NFKB1 (PubMed:19531803).</text>
</comment>
<comment type="subunit">
    <text evidence="1 2 3 7 8 9 10 11">Binds to the PKA RII-alpha regulatory subunit PRKAR2A (By similarity). Interacts (via C-terminus) with FIGN (PubMed:16751186). Interacts with NCAPD2, CCND3, CCNE1, MCM2, RPS6KA1, DDX5, PDE4A (By similarity). Interacts with MYCBP; MYCBP is translocated to the nucleus and the interaction prevents the association of the PKA catalytic subunit leading to suppression of PKA activity (PubMed:12414807). Interacts with CCND1, CASP3 (PubMed:14641107, PubMed:16227597). Interacts with NFKB1; detetcted in the cytoplasm (PubMed:19531803). Interacts with DPY30; mediating AKAP8 association with at least the MLL4/WBP7 HMT complex. Interacts with HDAC3; increased during mitosis. Interacts with GJA1; in the nucleus and in the nuclear membrane; the nuclear association increases with progress of cell cycle G1, S and G2 phase and decreases in M phase (By similarity).</text>
</comment>
<comment type="interaction">
    <interactant intactId="EBI-4285802">
        <id>Q9DBR0</id>
    </interactant>
    <interactant intactId="EBI-11111349">
        <id>Q9ERZ6</id>
        <label>Fign</label>
    </interactant>
    <organismsDiffer>false</organismsDiffer>
    <experiments>4</experiments>
</comment>
<comment type="interaction">
    <interactant intactId="EBI-4285802">
        <id>Q9DBR0</id>
    </interactant>
    <interactant intactId="EBI-643958">
        <id>P25799</id>
        <label>Nfkb1</label>
    </interactant>
    <organismsDiffer>false</organismsDiffer>
    <experiments>4</experiments>
</comment>
<comment type="subcellular location">
    <subcellularLocation>
        <location evidence="10">Nucleus matrix</location>
    </subcellularLocation>
    <subcellularLocation>
        <location evidence="1">Nucleus</location>
        <location evidence="1">Nucleolus</location>
    </subcellularLocation>
    <subcellularLocation>
        <location evidence="11">Cytoplasm</location>
    </subcellularLocation>
    <text evidence="1 6">Associated with the nuclear matrix (By similarity). Exhibits partial localization to the nucleolus in interphase, possibly to the fibrillary center and/or to the dense fibrillary component (By similarity). Redistributed and detached from condensed chromatin during mitosis (By similarity). Localizes specifically to the vicinity of the meiotic spindle in metaphase II oocytes (PubMed:12082153).</text>
</comment>
<comment type="developmental stage">
    <text evidence="6">Weakly expressed in metaphase II oocytes. Strongly up-regulated after fertilization at the pronuclear stage and restricted to the female pronucleus. Subsequently localized to the nucleus of each blastomere and on condensed chromosomes in mitotic cells.</text>
</comment>
<comment type="PTM">
    <text evidence="1">Phosphorylated on tyrosine residues probably by SRC subfamily protein kinases; multiple phosphorylation is leading to dissociation from nuclear structures implicated in chromatin structural changes.</text>
</comment>
<comment type="disruption phenotype">
    <text evidence="10">AKAP8 and FIGN double mutant mice die soon after birth due to cleft palate.</text>
</comment>
<comment type="similarity">
    <text evidence="4">Belongs to the AKAP95 family.</text>
</comment>
<dbReference type="EMBL" id="AB028920">
    <property type="protein sequence ID" value="BAA84710.1"/>
    <property type="molecule type" value="mRNA"/>
</dbReference>
<dbReference type="EMBL" id="AK004801">
    <property type="protein sequence ID" value="BAB23574.1"/>
    <property type="molecule type" value="mRNA"/>
</dbReference>
<dbReference type="EMBL" id="AK089092">
    <property type="protein sequence ID" value="BAC40746.1"/>
    <property type="molecule type" value="mRNA"/>
</dbReference>
<dbReference type="CCDS" id="CCDS37555.1"/>
<dbReference type="RefSeq" id="NP_062748.2">
    <property type="nucleotide sequence ID" value="NM_019774.5"/>
</dbReference>
<dbReference type="BioGRID" id="207953">
    <property type="interactions" value="31"/>
</dbReference>
<dbReference type="FunCoup" id="Q9DBR0">
    <property type="interactions" value="3495"/>
</dbReference>
<dbReference type="IntAct" id="Q9DBR0">
    <property type="interactions" value="27"/>
</dbReference>
<dbReference type="MINT" id="Q9DBR0"/>
<dbReference type="STRING" id="10090.ENSMUSP00000002699"/>
<dbReference type="GlyGen" id="Q9DBR0">
    <property type="glycosylation" value="2 sites, 1 N-linked glycan (1 site), 1 O-linked glycan (1 site)"/>
</dbReference>
<dbReference type="iPTMnet" id="Q9DBR0"/>
<dbReference type="PhosphoSitePlus" id="Q9DBR0"/>
<dbReference type="jPOST" id="Q9DBR0"/>
<dbReference type="PaxDb" id="10090-ENSMUSP00000002699"/>
<dbReference type="ProteomicsDB" id="285797"/>
<dbReference type="Pumba" id="Q9DBR0"/>
<dbReference type="Antibodypedia" id="1427">
    <property type="antibodies" value="354 antibodies from 35 providers"/>
</dbReference>
<dbReference type="DNASU" id="56399"/>
<dbReference type="Ensembl" id="ENSMUST00000002699.7">
    <property type="protein sequence ID" value="ENSMUSP00000002699.6"/>
    <property type="gene ID" value="ENSMUSG00000024045.7"/>
</dbReference>
<dbReference type="GeneID" id="56399"/>
<dbReference type="KEGG" id="mmu:56399"/>
<dbReference type="UCSC" id="uc008bwg.2">
    <property type="organism name" value="mouse"/>
</dbReference>
<dbReference type="AGR" id="MGI:1928488"/>
<dbReference type="CTD" id="10270"/>
<dbReference type="MGI" id="MGI:1928488">
    <property type="gene designation" value="Akap8"/>
</dbReference>
<dbReference type="VEuPathDB" id="HostDB:ENSMUSG00000024045"/>
<dbReference type="eggNOG" id="ENOG502QZY2">
    <property type="taxonomic scope" value="Eukaryota"/>
</dbReference>
<dbReference type="GeneTree" id="ENSGT00530000063777"/>
<dbReference type="HOGENOM" id="CLU_024193_1_0_1"/>
<dbReference type="InParanoid" id="Q9DBR0"/>
<dbReference type="OMA" id="WTELNYV"/>
<dbReference type="OrthoDB" id="8923935at2759"/>
<dbReference type="PhylomeDB" id="Q9DBR0"/>
<dbReference type="TreeFam" id="TF105407"/>
<dbReference type="BioGRID-ORCS" id="56399">
    <property type="hits" value="2 hits in 67 CRISPR screens"/>
</dbReference>
<dbReference type="ChiTaRS" id="Akap8">
    <property type="organism name" value="mouse"/>
</dbReference>
<dbReference type="PRO" id="PR:Q9DBR0"/>
<dbReference type="Proteomes" id="UP000000589">
    <property type="component" value="Chromosome 17"/>
</dbReference>
<dbReference type="RNAct" id="Q9DBR0">
    <property type="molecule type" value="protein"/>
</dbReference>
<dbReference type="Bgee" id="ENSMUSG00000024045">
    <property type="expression patterns" value="Expressed in retinal neural layer and 286 other cell types or tissues"/>
</dbReference>
<dbReference type="ExpressionAtlas" id="Q9DBR0">
    <property type="expression patterns" value="baseline and differential"/>
</dbReference>
<dbReference type="GO" id="GO:0000785">
    <property type="term" value="C:chromatin"/>
    <property type="evidence" value="ECO:0000266"/>
    <property type="project" value="MGI"/>
</dbReference>
<dbReference type="GO" id="GO:0000793">
    <property type="term" value="C:condensed chromosome"/>
    <property type="evidence" value="ECO:0000314"/>
    <property type="project" value="MGI"/>
</dbReference>
<dbReference type="GO" id="GO:0005737">
    <property type="term" value="C:cytoplasm"/>
    <property type="evidence" value="ECO:0007669"/>
    <property type="project" value="UniProtKB-SubCell"/>
</dbReference>
<dbReference type="GO" id="GO:0001939">
    <property type="term" value="C:female pronucleus"/>
    <property type="evidence" value="ECO:0000314"/>
    <property type="project" value="MGI"/>
</dbReference>
<dbReference type="GO" id="GO:0016363">
    <property type="term" value="C:nuclear matrix"/>
    <property type="evidence" value="ECO:0000314"/>
    <property type="project" value="UniProtKB"/>
</dbReference>
<dbReference type="GO" id="GO:0005730">
    <property type="term" value="C:nucleolus"/>
    <property type="evidence" value="ECO:0007669"/>
    <property type="project" value="UniProtKB-SubCell"/>
</dbReference>
<dbReference type="GO" id="GO:0005654">
    <property type="term" value="C:nucleoplasm"/>
    <property type="evidence" value="ECO:0007669"/>
    <property type="project" value="Ensembl"/>
</dbReference>
<dbReference type="GO" id="GO:0005634">
    <property type="term" value="C:nucleus"/>
    <property type="evidence" value="ECO:0000314"/>
    <property type="project" value="MGI"/>
</dbReference>
<dbReference type="GO" id="GO:0003682">
    <property type="term" value="F:chromatin binding"/>
    <property type="evidence" value="ECO:0000266"/>
    <property type="project" value="MGI"/>
</dbReference>
<dbReference type="GO" id="GO:0003690">
    <property type="term" value="F:double-stranded DNA binding"/>
    <property type="evidence" value="ECO:0007669"/>
    <property type="project" value="Ensembl"/>
</dbReference>
<dbReference type="GO" id="GO:0042826">
    <property type="term" value="F:histone deacetylase binding"/>
    <property type="evidence" value="ECO:0007669"/>
    <property type="project" value="Ensembl"/>
</dbReference>
<dbReference type="GO" id="GO:0051059">
    <property type="term" value="F:NF-kappaB binding"/>
    <property type="evidence" value="ECO:0000314"/>
    <property type="project" value="UniProtKB"/>
</dbReference>
<dbReference type="GO" id="GO:0034237">
    <property type="term" value="F:protein kinase A regulatory subunit binding"/>
    <property type="evidence" value="ECO:0007669"/>
    <property type="project" value="Ensembl"/>
</dbReference>
<dbReference type="GO" id="GO:0008270">
    <property type="term" value="F:zinc ion binding"/>
    <property type="evidence" value="ECO:0007669"/>
    <property type="project" value="UniProtKB-KW"/>
</dbReference>
<dbReference type="GO" id="GO:0044839">
    <property type="term" value="P:cell cycle G2/M phase transition"/>
    <property type="evidence" value="ECO:0007669"/>
    <property type="project" value="Ensembl"/>
</dbReference>
<dbReference type="GO" id="GO:0071222">
    <property type="term" value="P:cellular response to lipopolysaccharide"/>
    <property type="evidence" value="ECO:0000315"/>
    <property type="project" value="UniProtKB"/>
</dbReference>
<dbReference type="GO" id="GO:0071380">
    <property type="term" value="P:cellular response to prostaglandin E stimulus"/>
    <property type="evidence" value="ECO:0000315"/>
    <property type="project" value="UniProtKB"/>
</dbReference>
<dbReference type="GO" id="GO:0045087">
    <property type="term" value="P:innate immune response"/>
    <property type="evidence" value="ECO:0007669"/>
    <property type="project" value="UniProtKB-KW"/>
</dbReference>
<dbReference type="GO" id="GO:0007076">
    <property type="term" value="P:mitotic chromosome condensation"/>
    <property type="evidence" value="ECO:0000314"/>
    <property type="project" value="MGI"/>
</dbReference>
<dbReference type="GO" id="GO:0032720">
    <property type="term" value="P:negative regulation of tumor necrosis factor production"/>
    <property type="evidence" value="ECO:0000315"/>
    <property type="project" value="UniProtKB"/>
</dbReference>
<dbReference type="GO" id="GO:0015031">
    <property type="term" value="P:protein transport"/>
    <property type="evidence" value="ECO:0007669"/>
    <property type="project" value="UniProtKB-KW"/>
</dbReference>
<dbReference type="InterPro" id="IPR007071">
    <property type="entry name" value="AKAP95"/>
</dbReference>
<dbReference type="InterPro" id="IPR034736">
    <property type="entry name" value="ZF_C2H2_AKAP95"/>
</dbReference>
<dbReference type="PANTHER" id="PTHR12190:SF6">
    <property type="entry name" value="A-KINASE ANCHOR PROTEIN 8"/>
    <property type="match status" value="1"/>
</dbReference>
<dbReference type="PANTHER" id="PTHR12190">
    <property type="entry name" value="A-KINASE ANCHOR PROTEIN AKAP 8"/>
    <property type="match status" value="1"/>
</dbReference>
<dbReference type="Pfam" id="PF04988">
    <property type="entry name" value="AKAP95"/>
    <property type="match status" value="1"/>
</dbReference>
<dbReference type="SUPFAM" id="SSF56935">
    <property type="entry name" value="Porins"/>
    <property type="match status" value="1"/>
</dbReference>
<dbReference type="PROSITE" id="PS51799">
    <property type="entry name" value="ZF_C2H2_AKAP95"/>
    <property type="match status" value="2"/>
</dbReference>
<proteinExistence type="evidence at protein level"/>
<gene>
    <name type="primary">Akap8</name>
    <name type="synonym">Akap95</name>
</gene>
<accession>Q9DBR0</accession>
<accession>Q9R0L8</accession>
<reference key="1">
    <citation type="submission" date="1999-06" db="EMBL/GenBank/DDBJ databases">
        <title>Mouse AKAP95.</title>
        <authorList>
            <person name="Hattori A."/>
            <person name="Seki N."/>
            <person name="Hayashi A."/>
            <person name="Kozuma S."/>
            <person name="Muramatsu M."/>
            <person name="Miyajima N."/>
            <person name="Saito T."/>
        </authorList>
    </citation>
    <scope>NUCLEOTIDE SEQUENCE [MRNA]</scope>
</reference>
<reference key="2">
    <citation type="journal article" date="2005" name="Science">
        <title>The transcriptional landscape of the mammalian genome.</title>
        <authorList>
            <person name="Carninci P."/>
            <person name="Kasukawa T."/>
            <person name="Katayama S."/>
            <person name="Gough J."/>
            <person name="Frith M.C."/>
            <person name="Maeda N."/>
            <person name="Oyama R."/>
            <person name="Ravasi T."/>
            <person name="Lenhard B."/>
            <person name="Wells C."/>
            <person name="Kodzius R."/>
            <person name="Shimokawa K."/>
            <person name="Bajic V.B."/>
            <person name="Brenner S.E."/>
            <person name="Batalov S."/>
            <person name="Forrest A.R."/>
            <person name="Zavolan M."/>
            <person name="Davis M.J."/>
            <person name="Wilming L.G."/>
            <person name="Aidinis V."/>
            <person name="Allen J.E."/>
            <person name="Ambesi-Impiombato A."/>
            <person name="Apweiler R."/>
            <person name="Aturaliya R.N."/>
            <person name="Bailey T.L."/>
            <person name="Bansal M."/>
            <person name="Baxter L."/>
            <person name="Beisel K.W."/>
            <person name="Bersano T."/>
            <person name="Bono H."/>
            <person name="Chalk A.M."/>
            <person name="Chiu K.P."/>
            <person name="Choudhary V."/>
            <person name="Christoffels A."/>
            <person name="Clutterbuck D.R."/>
            <person name="Crowe M.L."/>
            <person name="Dalla E."/>
            <person name="Dalrymple B.P."/>
            <person name="de Bono B."/>
            <person name="Della Gatta G."/>
            <person name="di Bernardo D."/>
            <person name="Down T."/>
            <person name="Engstrom P."/>
            <person name="Fagiolini M."/>
            <person name="Faulkner G."/>
            <person name="Fletcher C.F."/>
            <person name="Fukushima T."/>
            <person name="Furuno M."/>
            <person name="Futaki S."/>
            <person name="Gariboldi M."/>
            <person name="Georgii-Hemming P."/>
            <person name="Gingeras T.R."/>
            <person name="Gojobori T."/>
            <person name="Green R.E."/>
            <person name="Gustincich S."/>
            <person name="Harbers M."/>
            <person name="Hayashi Y."/>
            <person name="Hensch T.K."/>
            <person name="Hirokawa N."/>
            <person name="Hill D."/>
            <person name="Huminiecki L."/>
            <person name="Iacono M."/>
            <person name="Ikeo K."/>
            <person name="Iwama A."/>
            <person name="Ishikawa T."/>
            <person name="Jakt M."/>
            <person name="Kanapin A."/>
            <person name="Katoh M."/>
            <person name="Kawasawa Y."/>
            <person name="Kelso J."/>
            <person name="Kitamura H."/>
            <person name="Kitano H."/>
            <person name="Kollias G."/>
            <person name="Krishnan S.P."/>
            <person name="Kruger A."/>
            <person name="Kummerfeld S.K."/>
            <person name="Kurochkin I.V."/>
            <person name="Lareau L.F."/>
            <person name="Lazarevic D."/>
            <person name="Lipovich L."/>
            <person name="Liu J."/>
            <person name="Liuni S."/>
            <person name="McWilliam S."/>
            <person name="Madan Babu M."/>
            <person name="Madera M."/>
            <person name="Marchionni L."/>
            <person name="Matsuda H."/>
            <person name="Matsuzawa S."/>
            <person name="Miki H."/>
            <person name="Mignone F."/>
            <person name="Miyake S."/>
            <person name="Morris K."/>
            <person name="Mottagui-Tabar S."/>
            <person name="Mulder N."/>
            <person name="Nakano N."/>
            <person name="Nakauchi H."/>
            <person name="Ng P."/>
            <person name="Nilsson R."/>
            <person name="Nishiguchi S."/>
            <person name="Nishikawa S."/>
            <person name="Nori F."/>
            <person name="Ohara O."/>
            <person name="Okazaki Y."/>
            <person name="Orlando V."/>
            <person name="Pang K.C."/>
            <person name="Pavan W.J."/>
            <person name="Pavesi G."/>
            <person name="Pesole G."/>
            <person name="Petrovsky N."/>
            <person name="Piazza S."/>
            <person name="Reed J."/>
            <person name="Reid J.F."/>
            <person name="Ring B.Z."/>
            <person name="Ringwald M."/>
            <person name="Rost B."/>
            <person name="Ruan Y."/>
            <person name="Salzberg S.L."/>
            <person name="Sandelin A."/>
            <person name="Schneider C."/>
            <person name="Schoenbach C."/>
            <person name="Sekiguchi K."/>
            <person name="Semple C.A."/>
            <person name="Seno S."/>
            <person name="Sessa L."/>
            <person name="Sheng Y."/>
            <person name="Shibata Y."/>
            <person name="Shimada H."/>
            <person name="Shimada K."/>
            <person name="Silva D."/>
            <person name="Sinclair B."/>
            <person name="Sperling S."/>
            <person name="Stupka E."/>
            <person name="Sugiura K."/>
            <person name="Sultana R."/>
            <person name="Takenaka Y."/>
            <person name="Taki K."/>
            <person name="Tammoja K."/>
            <person name="Tan S.L."/>
            <person name="Tang S."/>
            <person name="Taylor M.S."/>
            <person name="Tegner J."/>
            <person name="Teichmann S.A."/>
            <person name="Ueda H.R."/>
            <person name="van Nimwegen E."/>
            <person name="Verardo R."/>
            <person name="Wei C.L."/>
            <person name="Yagi K."/>
            <person name="Yamanishi H."/>
            <person name="Zabarovsky E."/>
            <person name="Zhu S."/>
            <person name="Zimmer A."/>
            <person name="Hide W."/>
            <person name="Bult C."/>
            <person name="Grimmond S.M."/>
            <person name="Teasdale R.D."/>
            <person name="Liu E.T."/>
            <person name="Brusic V."/>
            <person name="Quackenbush J."/>
            <person name="Wahlestedt C."/>
            <person name="Mattick J.S."/>
            <person name="Hume D.A."/>
            <person name="Kai C."/>
            <person name="Sasaki D."/>
            <person name="Tomaru Y."/>
            <person name="Fukuda S."/>
            <person name="Kanamori-Katayama M."/>
            <person name="Suzuki M."/>
            <person name="Aoki J."/>
            <person name="Arakawa T."/>
            <person name="Iida J."/>
            <person name="Imamura K."/>
            <person name="Itoh M."/>
            <person name="Kato T."/>
            <person name="Kawaji H."/>
            <person name="Kawagashira N."/>
            <person name="Kawashima T."/>
            <person name="Kojima M."/>
            <person name="Kondo S."/>
            <person name="Konno H."/>
            <person name="Nakano K."/>
            <person name="Ninomiya N."/>
            <person name="Nishio T."/>
            <person name="Okada M."/>
            <person name="Plessy C."/>
            <person name="Shibata K."/>
            <person name="Shiraki T."/>
            <person name="Suzuki S."/>
            <person name="Tagami M."/>
            <person name="Waki K."/>
            <person name="Watahiki A."/>
            <person name="Okamura-Oho Y."/>
            <person name="Suzuki H."/>
            <person name="Kawai J."/>
            <person name="Hayashizaki Y."/>
        </authorList>
    </citation>
    <scope>NUCLEOTIDE SEQUENCE [LARGE SCALE MRNA]</scope>
    <source>
        <strain>C57BL/6J</strain>
        <strain>NOD</strain>
        <tissue>Lung</tissue>
        <tissue>Thymus</tissue>
    </source>
</reference>
<reference key="3">
    <citation type="journal article" date="2002" name="J. Biol. Chem.">
        <title>AMY-1 interacts with S-AKAP84 and AKAP95 in the cytoplasm and the nucleus, respectively, and inhibits cAMP-dependent protein kinase activity by preventing binding of its catalytic subunit to A-kinase-anchoring protein (AKAP) complex.</title>
        <authorList>
            <person name="Furusawa M."/>
            <person name="Taira T."/>
            <person name="Iguchi-Ariga S.M."/>
            <person name="Ariga H."/>
        </authorList>
    </citation>
    <scope>INTERACTION WITH MYCBP</scope>
</reference>
<reference key="4">
    <citation type="journal article" date="2002" name="J. Cell Sci.">
        <title>Differential regulation of maternal and paternal chromosome condensation in mitotic zygotes.</title>
        <authorList>
            <person name="Bomar J."/>
            <person name="Moreira P."/>
            <person name="Balise J.J."/>
            <person name="Collas P."/>
        </authorList>
    </citation>
    <scope>FUNCTION</scope>
    <scope>SUBCELLULAR LOCATION</scope>
    <scope>DEVELOPMENTAL STAGE</scope>
</reference>
<reference key="5">
    <citation type="journal article" date="2004" name="Biochem. J.">
        <title>A novel partner for D-type cyclins: protein kinase A-anchoring protein AKAP95.</title>
        <authorList>
            <person name="Arsenijevic T."/>
            <person name="Degraef C."/>
            <person name="Dumont J.E."/>
            <person name="Roger P.P."/>
            <person name="Pirson I."/>
        </authorList>
    </citation>
    <scope>FUNCTION</scope>
    <scope>INTERACTION WITH CCND1</scope>
</reference>
<reference key="6">
    <citation type="journal article" date="2005" name="Mol. Cell. Biol.">
        <title>A-kinase-anchoring protein 95 functions as a potential carrier for the nuclear translocation of active caspase 3 through an enzyme-substrate-like association.</title>
        <authorList>
            <person name="Kamada S."/>
            <person name="Kikkawa U."/>
            <person name="Tsujimoto Y."/>
            <person name="Hunter T."/>
        </authorList>
    </citation>
    <scope>INTERACTION WITH CASP3</scope>
</reference>
<reference key="7">
    <citation type="journal article" date="2006" name="J. Biol. Chem.">
        <title>Interaction between fidgetin and protein kinase A-anchoring protein AKAP95 is critical for palatogenesis in the mouse.</title>
        <authorList>
            <person name="Yang Y."/>
            <person name="Mahaffey C.L."/>
            <person name="Berube N."/>
            <person name="Frankel W.N."/>
        </authorList>
    </citation>
    <scope>SUBCELLULAR LOCATION</scope>
    <scope>INTERACTION WITH FIGN</scope>
    <scope>DISRUPTION PHENOTYPE</scope>
</reference>
<reference key="8">
    <citation type="journal article" date="2009" name="Immunity">
        <title>The phagosomal proteome in interferon-gamma-activated macrophages.</title>
        <authorList>
            <person name="Trost M."/>
            <person name="English L."/>
            <person name="Lemieux S."/>
            <person name="Courcelles M."/>
            <person name="Desjardins M."/>
            <person name="Thibault P."/>
        </authorList>
    </citation>
    <scope>PHOSPHORYLATION [LARGE SCALE ANALYSIS] AT SER-320 AND SER-325</scope>
    <scope>IDENTIFICATION BY MASS SPECTROMETRY [LARGE SCALE ANALYSIS]</scope>
</reference>
<reference key="9">
    <citation type="journal article" date="2009" name="Sci. Signal.">
        <title>Suppression of LPS-induced TNF-alpha production in macrophages by cAMP is mediated by PKA-AKAP95-p105.</title>
        <authorList>
            <person name="Wall E.A."/>
            <person name="Zavzavadjian J.R."/>
            <person name="Chang M.S."/>
            <person name="Randhawa B."/>
            <person name="Zhu X."/>
            <person name="Hsueh R.C."/>
            <person name="Liu J."/>
            <person name="Driver A."/>
            <person name="Bao X.R."/>
            <person name="Sternweis P.C."/>
            <person name="Simon M.I."/>
            <person name="Fraser I.D."/>
        </authorList>
    </citation>
    <scope>FUNCTION</scope>
    <scope>INTERACTION WITH NFKB1</scope>
    <scope>SUBCELLULAR LOCATION</scope>
</reference>
<reference key="10">
    <citation type="journal article" date="2010" name="Cell">
        <title>A tissue-specific atlas of mouse protein phosphorylation and expression.</title>
        <authorList>
            <person name="Huttlin E.L."/>
            <person name="Jedrychowski M.P."/>
            <person name="Elias J.E."/>
            <person name="Goswami T."/>
            <person name="Rad R."/>
            <person name="Beausoleil S.A."/>
            <person name="Villen J."/>
            <person name="Haas W."/>
            <person name="Sowa M.E."/>
            <person name="Gygi S.P."/>
        </authorList>
    </citation>
    <scope>PHOSPHORYLATION [LARGE SCALE ANALYSIS] AT SER-72; SER-320; SER-325 AND SER-336</scope>
    <scope>IDENTIFICATION BY MASS SPECTROMETRY [LARGE SCALE ANALYSIS]</scope>
    <source>
        <tissue>Brain</tissue>
        <tissue>Brown adipose tissue</tissue>
        <tissue>Heart</tissue>
        <tissue>Kidney</tissue>
        <tissue>Liver</tissue>
        <tissue>Lung</tissue>
        <tissue>Pancreas</tissue>
        <tissue>Spleen</tissue>
        <tissue>Testis</tissue>
    </source>
</reference>
<reference key="11">
    <citation type="journal article" date="2014" name="Mol. Cell. Proteomics">
        <title>Immunoaffinity enrichment and mass spectrometry analysis of protein methylation.</title>
        <authorList>
            <person name="Guo A."/>
            <person name="Gu H."/>
            <person name="Zhou J."/>
            <person name="Mulhern D."/>
            <person name="Wang Y."/>
            <person name="Lee K.A."/>
            <person name="Yang V."/>
            <person name="Aguiar M."/>
            <person name="Kornhauser J."/>
            <person name="Jia X."/>
            <person name="Ren J."/>
            <person name="Beausoleil S.A."/>
            <person name="Silva J.C."/>
            <person name="Vemulapalli V."/>
            <person name="Bedford M.T."/>
            <person name="Comb M.J."/>
        </authorList>
    </citation>
    <scope>METHYLATION [LARGE SCALE ANALYSIS] AT ARG-109; ARG-232 AND ARG-276</scope>
    <scope>IDENTIFICATION BY MASS SPECTROMETRY [LARGE SCALE ANALYSIS]</scope>
    <source>
        <tissue>Brain</tissue>
        <tissue>Embryo</tissue>
    </source>
</reference>
<evidence type="ECO:0000250" key="1">
    <source>
        <dbReference type="UniProtKB" id="O43823"/>
    </source>
</evidence>
<evidence type="ECO:0000250" key="2">
    <source>
        <dbReference type="UniProtKB" id="Q5VK71"/>
    </source>
</evidence>
<evidence type="ECO:0000250" key="3">
    <source>
        <dbReference type="UniProtKB" id="Q63014"/>
    </source>
</evidence>
<evidence type="ECO:0000255" key="4">
    <source>
        <dbReference type="PROSITE-ProRule" id="PRU01140"/>
    </source>
</evidence>
<evidence type="ECO:0000256" key="5">
    <source>
        <dbReference type="SAM" id="MobiDB-lite"/>
    </source>
</evidence>
<evidence type="ECO:0000269" key="6">
    <source>
    </source>
</evidence>
<evidence type="ECO:0000269" key="7">
    <source>
    </source>
</evidence>
<evidence type="ECO:0000269" key="8">
    <source>
    </source>
</evidence>
<evidence type="ECO:0000269" key="9">
    <source>
    </source>
</evidence>
<evidence type="ECO:0000269" key="10">
    <source>
    </source>
</evidence>
<evidence type="ECO:0000269" key="11">
    <source>
    </source>
</evidence>
<evidence type="ECO:0000305" key="12"/>
<evidence type="ECO:0007744" key="13">
    <source>
    </source>
</evidence>
<evidence type="ECO:0007744" key="14">
    <source>
    </source>
</evidence>
<evidence type="ECO:0007744" key="15">
    <source>
    </source>
</evidence>
<organism>
    <name type="scientific">Mus musculus</name>
    <name type="common">Mouse</name>
    <dbReference type="NCBI Taxonomy" id="10090"/>
    <lineage>
        <taxon>Eukaryota</taxon>
        <taxon>Metazoa</taxon>
        <taxon>Chordata</taxon>
        <taxon>Craniata</taxon>
        <taxon>Vertebrata</taxon>
        <taxon>Euteleostomi</taxon>
        <taxon>Mammalia</taxon>
        <taxon>Eutheria</taxon>
        <taxon>Euarchontoglires</taxon>
        <taxon>Glires</taxon>
        <taxon>Rodentia</taxon>
        <taxon>Myomorpha</taxon>
        <taxon>Muroidea</taxon>
        <taxon>Muridae</taxon>
        <taxon>Murinae</taxon>
        <taxon>Mus</taxon>
        <taxon>Mus</taxon>
    </lineage>
</organism>